<keyword id="KW-0687">Ribonucleoprotein</keyword>
<keyword id="KW-0689">Ribosomal protein</keyword>
<keyword id="KW-0694">RNA-binding</keyword>
<keyword id="KW-0699">rRNA-binding</keyword>
<accession>A7GJ72</accession>
<organism>
    <name type="scientific">Clostridium botulinum (strain Langeland / NCTC 10281 / Type F)</name>
    <dbReference type="NCBI Taxonomy" id="441772"/>
    <lineage>
        <taxon>Bacteria</taxon>
        <taxon>Bacillati</taxon>
        <taxon>Bacillota</taxon>
        <taxon>Clostridia</taxon>
        <taxon>Eubacteriales</taxon>
        <taxon>Clostridiaceae</taxon>
        <taxon>Clostridium</taxon>
    </lineage>
</organism>
<sequence>MKLTNYDIIRRPLITEKTMASMADKKYTFVVDIHANKSQIKNAIETIFDVKVEDVKTARIMGKTKRVGVHIGKRPDYKKAIVKLTEDSKTIEFFEGL</sequence>
<protein>
    <recommendedName>
        <fullName evidence="1">Large ribosomal subunit protein uL23</fullName>
    </recommendedName>
    <alternativeName>
        <fullName evidence="2">50S ribosomal protein L23</fullName>
    </alternativeName>
</protein>
<dbReference type="EMBL" id="CP000728">
    <property type="protein sequence ID" value="ABS40199.1"/>
    <property type="molecule type" value="Genomic_DNA"/>
</dbReference>
<dbReference type="RefSeq" id="WP_003357444.1">
    <property type="nucleotide sequence ID" value="NC_009699.1"/>
</dbReference>
<dbReference type="SMR" id="A7GJ72"/>
<dbReference type="GeneID" id="92940248"/>
<dbReference type="KEGG" id="cbf:CLI_3661"/>
<dbReference type="HOGENOM" id="CLU_037562_3_2_9"/>
<dbReference type="Proteomes" id="UP000002410">
    <property type="component" value="Chromosome"/>
</dbReference>
<dbReference type="GO" id="GO:1990904">
    <property type="term" value="C:ribonucleoprotein complex"/>
    <property type="evidence" value="ECO:0007669"/>
    <property type="project" value="UniProtKB-KW"/>
</dbReference>
<dbReference type="GO" id="GO:0005840">
    <property type="term" value="C:ribosome"/>
    <property type="evidence" value="ECO:0007669"/>
    <property type="project" value="UniProtKB-KW"/>
</dbReference>
<dbReference type="GO" id="GO:0019843">
    <property type="term" value="F:rRNA binding"/>
    <property type="evidence" value="ECO:0007669"/>
    <property type="project" value="UniProtKB-UniRule"/>
</dbReference>
<dbReference type="GO" id="GO:0003735">
    <property type="term" value="F:structural constituent of ribosome"/>
    <property type="evidence" value="ECO:0007669"/>
    <property type="project" value="InterPro"/>
</dbReference>
<dbReference type="GO" id="GO:0006412">
    <property type="term" value="P:translation"/>
    <property type="evidence" value="ECO:0007669"/>
    <property type="project" value="UniProtKB-UniRule"/>
</dbReference>
<dbReference type="FunFam" id="3.30.70.330:FF:000001">
    <property type="entry name" value="50S ribosomal protein L23"/>
    <property type="match status" value="1"/>
</dbReference>
<dbReference type="Gene3D" id="3.30.70.330">
    <property type="match status" value="1"/>
</dbReference>
<dbReference type="HAMAP" id="MF_01369_B">
    <property type="entry name" value="Ribosomal_uL23_B"/>
    <property type="match status" value="1"/>
</dbReference>
<dbReference type="InterPro" id="IPR012677">
    <property type="entry name" value="Nucleotide-bd_a/b_plait_sf"/>
</dbReference>
<dbReference type="InterPro" id="IPR013025">
    <property type="entry name" value="Ribosomal_uL23-like"/>
</dbReference>
<dbReference type="InterPro" id="IPR012678">
    <property type="entry name" value="Ribosomal_uL23/eL15/eS24_sf"/>
</dbReference>
<dbReference type="InterPro" id="IPR001014">
    <property type="entry name" value="Ribosomal_uL23_CS"/>
</dbReference>
<dbReference type="NCBIfam" id="NF004363">
    <property type="entry name" value="PRK05738.2-4"/>
    <property type="match status" value="1"/>
</dbReference>
<dbReference type="PANTHER" id="PTHR11620">
    <property type="entry name" value="60S RIBOSOMAL PROTEIN L23A"/>
    <property type="match status" value="1"/>
</dbReference>
<dbReference type="Pfam" id="PF00276">
    <property type="entry name" value="Ribosomal_L23"/>
    <property type="match status" value="1"/>
</dbReference>
<dbReference type="SUPFAM" id="SSF54189">
    <property type="entry name" value="Ribosomal proteins S24e, L23 and L15e"/>
    <property type="match status" value="1"/>
</dbReference>
<dbReference type="PROSITE" id="PS00050">
    <property type="entry name" value="RIBOSOMAL_L23"/>
    <property type="match status" value="1"/>
</dbReference>
<name>RL23_CLOBL</name>
<feature type="chain" id="PRO_1000068065" description="Large ribosomal subunit protein uL23">
    <location>
        <begin position="1"/>
        <end position="97"/>
    </location>
</feature>
<proteinExistence type="inferred from homology"/>
<comment type="function">
    <text evidence="1">One of the early assembly proteins it binds 23S rRNA. One of the proteins that surrounds the polypeptide exit tunnel on the outside of the ribosome. Forms the main docking site for trigger factor binding to the ribosome.</text>
</comment>
<comment type="subunit">
    <text evidence="1">Part of the 50S ribosomal subunit. Contacts protein L29, and trigger factor when it is bound to the ribosome.</text>
</comment>
<comment type="similarity">
    <text evidence="1">Belongs to the universal ribosomal protein uL23 family.</text>
</comment>
<reference key="1">
    <citation type="submission" date="2007-06" db="EMBL/GenBank/DDBJ databases">
        <authorList>
            <person name="Brinkac L.M."/>
            <person name="Daugherty S."/>
            <person name="Dodson R.J."/>
            <person name="Madupu R."/>
            <person name="Brown J.L."/>
            <person name="Bruce D."/>
            <person name="Detter C."/>
            <person name="Munk C."/>
            <person name="Smith L.A."/>
            <person name="Smith T.J."/>
            <person name="White O."/>
            <person name="Brettin T.S."/>
        </authorList>
    </citation>
    <scope>NUCLEOTIDE SEQUENCE [LARGE SCALE GENOMIC DNA]</scope>
    <source>
        <strain>Langeland / NCTC 10281 / Type F</strain>
    </source>
</reference>
<gene>
    <name evidence="1" type="primary">rplW</name>
    <name type="ordered locus">CLI_3661</name>
</gene>
<evidence type="ECO:0000255" key="1">
    <source>
        <dbReference type="HAMAP-Rule" id="MF_01369"/>
    </source>
</evidence>
<evidence type="ECO:0000305" key="2"/>